<sequence length="189" mass="21112">MYLVVGLGNIGKEYKKTRHNIGFDVVDIIAEKYNIEINRQKFKGSYGEGRIGNEKIILLKPSTYMNLSGESVIEAANFYKIDKENIIVIYDDMSIDIGKLRVRSKGSAGGHNGIKNIIQHLNSDIFPRVRVGIGQPDENVVNYVLGKFSKDEREIIEKVLAMSAKACISIVEDGVTEAMNKYNGVKIEV</sequence>
<feature type="chain" id="PRO_1000010583" description="Peptidyl-tRNA hydrolase">
    <location>
        <begin position="1"/>
        <end position="189"/>
    </location>
</feature>
<feature type="active site" description="Proton acceptor" evidence="1">
    <location>
        <position position="19"/>
    </location>
</feature>
<feature type="binding site" evidence="1">
    <location>
        <position position="14"/>
    </location>
    <ligand>
        <name>tRNA</name>
        <dbReference type="ChEBI" id="CHEBI:17843"/>
    </ligand>
</feature>
<feature type="binding site" evidence="1">
    <location>
        <position position="64"/>
    </location>
    <ligand>
        <name>tRNA</name>
        <dbReference type="ChEBI" id="CHEBI:17843"/>
    </ligand>
</feature>
<feature type="binding site" evidence="1">
    <location>
        <position position="66"/>
    </location>
    <ligand>
        <name>tRNA</name>
        <dbReference type="ChEBI" id="CHEBI:17843"/>
    </ligand>
</feature>
<feature type="binding site" evidence="1">
    <location>
        <position position="112"/>
    </location>
    <ligand>
        <name>tRNA</name>
        <dbReference type="ChEBI" id="CHEBI:17843"/>
    </ligand>
</feature>
<feature type="site" description="Discriminates between blocked and unblocked aminoacyl-tRNA" evidence="1">
    <location>
        <position position="9"/>
    </location>
</feature>
<feature type="site" description="Stabilizes the basic form of H active site to accept a proton" evidence="1">
    <location>
        <position position="91"/>
    </location>
</feature>
<reference key="1">
    <citation type="journal article" date="2007" name="PLoS ONE">
        <title>Analysis of the neurotoxin complex genes in Clostridium botulinum A1-A4 and B1 strains: BoNT/A3, /Ba4 and /B1 clusters are located within plasmids.</title>
        <authorList>
            <person name="Smith T.J."/>
            <person name="Hill K.K."/>
            <person name="Foley B.T."/>
            <person name="Detter J.C."/>
            <person name="Munk A.C."/>
            <person name="Bruce D.C."/>
            <person name="Doggett N.A."/>
            <person name="Smith L.A."/>
            <person name="Marks J.D."/>
            <person name="Xie G."/>
            <person name="Brettin T.S."/>
        </authorList>
    </citation>
    <scope>NUCLEOTIDE SEQUENCE [LARGE SCALE GENOMIC DNA]</scope>
    <source>
        <strain>ATCC 19397 / Type A</strain>
    </source>
</reference>
<organism>
    <name type="scientific">Clostridium botulinum (strain ATCC 19397 / Type A)</name>
    <dbReference type="NCBI Taxonomy" id="441770"/>
    <lineage>
        <taxon>Bacteria</taxon>
        <taxon>Bacillati</taxon>
        <taxon>Bacillota</taxon>
        <taxon>Clostridia</taxon>
        <taxon>Eubacteriales</taxon>
        <taxon>Clostridiaceae</taxon>
        <taxon>Clostridium</taxon>
    </lineage>
</organism>
<comment type="function">
    <text evidence="1">Hydrolyzes ribosome-free peptidyl-tRNAs (with 1 or more amino acids incorporated), which drop off the ribosome during protein synthesis, or as a result of ribosome stalling.</text>
</comment>
<comment type="function">
    <text evidence="1">Catalyzes the release of premature peptidyl moieties from peptidyl-tRNA molecules trapped in stalled 50S ribosomal subunits, and thus maintains levels of free tRNAs and 50S ribosomes.</text>
</comment>
<comment type="catalytic activity">
    <reaction evidence="1">
        <text>an N-acyl-L-alpha-aminoacyl-tRNA + H2O = an N-acyl-L-amino acid + a tRNA + H(+)</text>
        <dbReference type="Rhea" id="RHEA:54448"/>
        <dbReference type="Rhea" id="RHEA-COMP:10123"/>
        <dbReference type="Rhea" id="RHEA-COMP:13883"/>
        <dbReference type="ChEBI" id="CHEBI:15377"/>
        <dbReference type="ChEBI" id="CHEBI:15378"/>
        <dbReference type="ChEBI" id="CHEBI:59874"/>
        <dbReference type="ChEBI" id="CHEBI:78442"/>
        <dbReference type="ChEBI" id="CHEBI:138191"/>
        <dbReference type="EC" id="3.1.1.29"/>
    </reaction>
</comment>
<comment type="subunit">
    <text evidence="1">Monomer.</text>
</comment>
<comment type="subcellular location">
    <subcellularLocation>
        <location evidence="1">Cytoplasm</location>
    </subcellularLocation>
</comment>
<comment type="similarity">
    <text evidence="1">Belongs to the PTH family.</text>
</comment>
<proteinExistence type="inferred from homology"/>
<protein>
    <recommendedName>
        <fullName evidence="1">Peptidyl-tRNA hydrolase</fullName>
        <shortName evidence="1">Pth</shortName>
        <ecNumber evidence="1">3.1.1.29</ecNumber>
    </recommendedName>
</protein>
<accession>A7FPJ7</accession>
<keyword id="KW-0963">Cytoplasm</keyword>
<keyword id="KW-0378">Hydrolase</keyword>
<keyword id="KW-0694">RNA-binding</keyword>
<keyword id="KW-0820">tRNA-binding</keyword>
<name>PTH_CLOB1</name>
<evidence type="ECO:0000255" key="1">
    <source>
        <dbReference type="HAMAP-Rule" id="MF_00083"/>
    </source>
</evidence>
<dbReference type="EC" id="3.1.1.29" evidence="1"/>
<dbReference type="EMBL" id="CP000726">
    <property type="protein sequence ID" value="ABS33523.1"/>
    <property type="molecule type" value="Genomic_DNA"/>
</dbReference>
<dbReference type="RefSeq" id="WP_012048384.1">
    <property type="nucleotide sequence ID" value="NC_009697.1"/>
</dbReference>
<dbReference type="SMR" id="A7FPJ7"/>
<dbReference type="GeneID" id="5187794"/>
<dbReference type="KEGG" id="cba:CLB_3621"/>
<dbReference type="HOGENOM" id="CLU_062456_4_1_9"/>
<dbReference type="GO" id="GO:0005737">
    <property type="term" value="C:cytoplasm"/>
    <property type="evidence" value="ECO:0007669"/>
    <property type="project" value="UniProtKB-SubCell"/>
</dbReference>
<dbReference type="GO" id="GO:0004045">
    <property type="term" value="F:peptidyl-tRNA hydrolase activity"/>
    <property type="evidence" value="ECO:0007669"/>
    <property type="project" value="UniProtKB-UniRule"/>
</dbReference>
<dbReference type="GO" id="GO:0000049">
    <property type="term" value="F:tRNA binding"/>
    <property type="evidence" value="ECO:0007669"/>
    <property type="project" value="UniProtKB-UniRule"/>
</dbReference>
<dbReference type="GO" id="GO:0006515">
    <property type="term" value="P:protein quality control for misfolded or incompletely synthesized proteins"/>
    <property type="evidence" value="ECO:0007669"/>
    <property type="project" value="UniProtKB-UniRule"/>
</dbReference>
<dbReference type="GO" id="GO:0072344">
    <property type="term" value="P:rescue of stalled ribosome"/>
    <property type="evidence" value="ECO:0007669"/>
    <property type="project" value="UniProtKB-UniRule"/>
</dbReference>
<dbReference type="CDD" id="cd00462">
    <property type="entry name" value="PTH"/>
    <property type="match status" value="1"/>
</dbReference>
<dbReference type="FunFam" id="3.40.50.1470:FF:000001">
    <property type="entry name" value="Peptidyl-tRNA hydrolase"/>
    <property type="match status" value="1"/>
</dbReference>
<dbReference type="Gene3D" id="3.40.50.1470">
    <property type="entry name" value="Peptidyl-tRNA hydrolase"/>
    <property type="match status" value="1"/>
</dbReference>
<dbReference type="HAMAP" id="MF_00083">
    <property type="entry name" value="Pept_tRNA_hydro_bact"/>
    <property type="match status" value="1"/>
</dbReference>
<dbReference type="InterPro" id="IPR001328">
    <property type="entry name" value="Pept_tRNA_hydro"/>
</dbReference>
<dbReference type="InterPro" id="IPR018171">
    <property type="entry name" value="Pept_tRNA_hydro_CS"/>
</dbReference>
<dbReference type="InterPro" id="IPR036416">
    <property type="entry name" value="Pept_tRNA_hydro_sf"/>
</dbReference>
<dbReference type="NCBIfam" id="TIGR00447">
    <property type="entry name" value="pth"/>
    <property type="match status" value="1"/>
</dbReference>
<dbReference type="PANTHER" id="PTHR17224">
    <property type="entry name" value="PEPTIDYL-TRNA HYDROLASE"/>
    <property type="match status" value="1"/>
</dbReference>
<dbReference type="PANTHER" id="PTHR17224:SF1">
    <property type="entry name" value="PEPTIDYL-TRNA HYDROLASE"/>
    <property type="match status" value="1"/>
</dbReference>
<dbReference type="Pfam" id="PF01195">
    <property type="entry name" value="Pept_tRNA_hydro"/>
    <property type="match status" value="1"/>
</dbReference>
<dbReference type="SUPFAM" id="SSF53178">
    <property type="entry name" value="Peptidyl-tRNA hydrolase-like"/>
    <property type="match status" value="1"/>
</dbReference>
<dbReference type="PROSITE" id="PS01195">
    <property type="entry name" value="PEPT_TRNA_HYDROL_1"/>
    <property type="match status" value="1"/>
</dbReference>
<dbReference type="PROSITE" id="PS01196">
    <property type="entry name" value="PEPT_TRNA_HYDROL_2"/>
    <property type="match status" value="1"/>
</dbReference>
<gene>
    <name evidence="1" type="primary">pth</name>
    <name type="ordered locus">CLB_3621</name>
</gene>